<gene>
    <name type="ordered locus">BH14810</name>
</gene>
<sequence>MAGHSQFKNIMHRKGRQDAMRSKIFSKLAREITVAAKQGSPDPAMNPRLRLAVQNAKAQSMPKDNIERAIKKASGSDVENYDEVRYEGYGPGGVAVIVEALTDNRNRTASNIRAAFTKSGGALGETGSVSFMFNRIGEIIYKPEAGTTDNIMDAAIEAGAEDVQSEETGHHIICTFEDIGEVSKMLEAKLGEAESIKTVWKATTLTPVDEEKALSILRLISTLEEDDDVQNVYANFDVSDEILAKLSA</sequence>
<evidence type="ECO:0000255" key="1">
    <source>
        <dbReference type="HAMAP-Rule" id="MF_00693"/>
    </source>
</evidence>
<accession>Q6G5P2</accession>
<comment type="subcellular location">
    <subcellularLocation>
        <location evidence="1">Cytoplasm</location>
    </subcellularLocation>
</comment>
<comment type="similarity">
    <text evidence="1">Belongs to the TACO1 family.</text>
</comment>
<proteinExistence type="inferred from homology"/>
<organism>
    <name type="scientific">Bartonella henselae (strain ATCC 49882 / DSM 28221 / CCUG 30454 / Houston 1)</name>
    <name type="common">Rochalimaea henselae</name>
    <dbReference type="NCBI Taxonomy" id="283166"/>
    <lineage>
        <taxon>Bacteria</taxon>
        <taxon>Pseudomonadati</taxon>
        <taxon>Pseudomonadota</taxon>
        <taxon>Alphaproteobacteria</taxon>
        <taxon>Hyphomicrobiales</taxon>
        <taxon>Bartonellaceae</taxon>
        <taxon>Bartonella</taxon>
    </lineage>
</organism>
<feature type="chain" id="PRO_0000175765" description="Probable transcriptional regulatory protein BH14810">
    <location>
        <begin position="1"/>
        <end position="248"/>
    </location>
</feature>
<name>Y1481_BARHE</name>
<dbReference type="EMBL" id="BX897699">
    <property type="protein sequence ID" value="CAF28244.1"/>
    <property type="molecule type" value="Genomic_DNA"/>
</dbReference>
<dbReference type="RefSeq" id="WP_011181251.1">
    <property type="nucleotide sequence ID" value="NC_005956.1"/>
</dbReference>
<dbReference type="SMR" id="Q6G5P2"/>
<dbReference type="PaxDb" id="283166-BH14810"/>
<dbReference type="EnsemblBacteria" id="CAF28244">
    <property type="protein sequence ID" value="CAF28244"/>
    <property type="gene ID" value="BH14810"/>
</dbReference>
<dbReference type="GeneID" id="92986095"/>
<dbReference type="KEGG" id="bhe:BH14810"/>
<dbReference type="eggNOG" id="COG0217">
    <property type="taxonomic scope" value="Bacteria"/>
</dbReference>
<dbReference type="OrthoDB" id="9781053at2"/>
<dbReference type="Proteomes" id="UP000000421">
    <property type="component" value="Chromosome"/>
</dbReference>
<dbReference type="GO" id="GO:0005829">
    <property type="term" value="C:cytosol"/>
    <property type="evidence" value="ECO:0007669"/>
    <property type="project" value="TreeGrafter"/>
</dbReference>
<dbReference type="GO" id="GO:0003677">
    <property type="term" value="F:DNA binding"/>
    <property type="evidence" value="ECO:0007669"/>
    <property type="project" value="UniProtKB-UniRule"/>
</dbReference>
<dbReference type="GO" id="GO:0006355">
    <property type="term" value="P:regulation of DNA-templated transcription"/>
    <property type="evidence" value="ECO:0007669"/>
    <property type="project" value="UniProtKB-UniRule"/>
</dbReference>
<dbReference type="FunFam" id="1.10.10.200:FF:000002">
    <property type="entry name" value="Probable transcriptional regulatory protein CLM62_37755"/>
    <property type="match status" value="1"/>
</dbReference>
<dbReference type="Gene3D" id="1.10.10.200">
    <property type="match status" value="1"/>
</dbReference>
<dbReference type="Gene3D" id="3.30.70.980">
    <property type="match status" value="2"/>
</dbReference>
<dbReference type="HAMAP" id="MF_00693">
    <property type="entry name" value="Transcrip_reg_TACO1"/>
    <property type="match status" value="1"/>
</dbReference>
<dbReference type="InterPro" id="IPR017856">
    <property type="entry name" value="Integrase-like_N"/>
</dbReference>
<dbReference type="InterPro" id="IPR048300">
    <property type="entry name" value="TACO1_YebC-like_2nd/3rd_dom"/>
</dbReference>
<dbReference type="InterPro" id="IPR049083">
    <property type="entry name" value="TACO1_YebC_N"/>
</dbReference>
<dbReference type="InterPro" id="IPR002876">
    <property type="entry name" value="Transcrip_reg_TACO1-like"/>
</dbReference>
<dbReference type="InterPro" id="IPR026564">
    <property type="entry name" value="Transcrip_reg_TACO1-like_dom3"/>
</dbReference>
<dbReference type="InterPro" id="IPR029072">
    <property type="entry name" value="YebC-like"/>
</dbReference>
<dbReference type="NCBIfam" id="NF001030">
    <property type="entry name" value="PRK00110.1"/>
    <property type="match status" value="1"/>
</dbReference>
<dbReference type="NCBIfam" id="NF009044">
    <property type="entry name" value="PRK12378.1"/>
    <property type="match status" value="1"/>
</dbReference>
<dbReference type="NCBIfam" id="TIGR01033">
    <property type="entry name" value="YebC/PmpR family DNA-binding transcriptional regulator"/>
    <property type="match status" value="1"/>
</dbReference>
<dbReference type="PANTHER" id="PTHR12532:SF6">
    <property type="entry name" value="TRANSCRIPTIONAL REGULATORY PROTEIN YEBC-RELATED"/>
    <property type="match status" value="1"/>
</dbReference>
<dbReference type="PANTHER" id="PTHR12532">
    <property type="entry name" value="TRANSLATIONAL ACTIVATOR OF CYTOCHROME C OXIDASE 1"/>
    <property type="match status" value="1"/>
</dbReference>
<dbReference type="Pfam" id="PF20772">
    <property type="entry name" value="TACO1_YebC_N"/>
    <property type="match status" value="1"/>
</dbReference>
<dbReference type="Pfam" id="PF01709">
    <property type="entry name" value="Transcrip_reg"/>
    <property type="match status" value="1"/>
</dbReference>
<dbReference type="SUPFAM" id="SSF75625">
    <property type="entry name" value="YebC-like"/>
    <property type="match status" value="1"/>
</dbReference>
<keyword id="KW-0963">Cytoplasm</keyword>
<keyword id="KW-0238">DNA-binding</keyword>
<keyword id="KW-0804">Transcription</keyword>
<keyword id="KW-0805">Transcription regulation</keyword>
<reference key="1">
    <citation type="journal article" date="2004" name="Proc. Natl. Acad. Sci. U.S.A.">
        <title>The louse-borne human pathogen Bartonella quintana is a genomic derivative of the zoonotic agent Bartonella henselae.</title>
        <authorList>
            <person name="Alsmark U.C.M."/>
            <person name="Frank A.C."/>
            <person name="Karlberg E.O."/>
            <person name="Legault B.-A."/>
            <person name="Ardell D.H."/>
            <person name="Canbaeck B."/>
            <person name="Eriksson A.-S."/>
            <person name="Naeslund A.K."/>
            <person name="Handley S.A."/>
            <person name="Huvet M."/>
            <person name="La Scola B."/>
            <person name="Holmberg M."/>
            <person name="Andersson S.G.E."/>
        </authorList>
    </citation>
    <scope>NUCLEOTIDE SEQUENCE [LARGE SCALE GENOMIC DNA]</scope>
    <source>
        <strain>ATCC 49882 / DSM 28221 / CCUG 30454 / Houston 1</strain>
    </source>
</reference>
<protein>
    <recommendedName>
        <fullName evidence="1">Probable transcriptional regulatory protein BH14810</fullName>
    </recommendedName>
</protein>